<proteinExistence type="inferred from homology"/>
<accession>Q9MIY4</accession>
<sequence>MAHQAHAYHMVDPSPWPLTGAVAALLMSSGLAIWFHLHSMTLIVLGMILLILTMIQWWRDIIREGTFQGHHTPPVQKGLRYGMILFITSEVFFFLGFFWAFYHSSLAPTPELGGCWPPTGLTTLDPFEVPLLNTAVLLASGVTVTWAHHSLMEGERKQAIQSLALTILLGLYFTALQAMEYYEAPFTIADGVYGSTFFVATGFHGLHVIIGSTFLAVCLLRQVLFHFTSDHHFGFEAAAWYWHFVDVVWLFLYVSIYWWGS</sequence>
<keyword id="KW-0472">Membrane</keyword>
<keyword id="KW-0496">Mitochondrion</keyword>
<keyword id="KW-0999">Mitochondrion inner membrane</keyword>
<keyword id="KW-1185">Reference proteome</keyword>
<keyword id="KW-1278">Translocase</keyword>
<keyword id="KW-0812">Transmembrane</keyword>
<keyword id="KW-1133">Transmembrane helix</keyword>
<comment type="function">
    <text evidence="2">Component of the cytochrome c oxidase, the last enzyme in the mitochondrial electron transport chain which drives oxidative phosphorylation. The respiratory chain contains 3 multisubunit complexes succinate dehydrogenase (complex II, CII), ubiquinol-cytochrome c oxidoreductase (cytochrome b-c1 complex, complex III, CIII) and cytochrome c oxidase (complex IV, CIV), that cooperate to transfer electrons derived from NADH and succinate to molecular oxygen, creating an electrochemical gradient over the inner membrane that drives transmembrane transport and the ATP synthase. Cytochrome c oxidase is the component of the respiratory chain that catalyzes the reduction of oxygen to water. Electrons originating from reduced cytochrome c in the intermembrane space (IMS) are transferred via the dinuclear copper A center (CU(A)) of subunit 2 and heme A of subunit 1 to the active site in subunit 1, a binuclear center (BNC) formed by heme A3 and copper B (CU(B)). The BNC reduces molecular oxygen to 2 water molecules using 4 electrons from cytochrome c in the IMS and 4 protons from the mitochondrial matrix.</text>
</comment>
<comment type="catalytic activity">
    <reaction evidence="2">
        <text>4 Fe(II)-[cytochrome c] + O2 + 8 H(+)(in) = 4 Fe(III)-[cytochrome c] + 2 H2O + 4 H(+)(out)</text>
        <dbReference type="Rhea" id="RHEA:11436"/>
        <dbReference type="Rhea" id="RHEA-COMP:10350"/>
        <dbReference type="Rhea" id="RHEA-COMP:14399"/>
        <dbReference type="ChEBI" id="CHEBI:15377"/>
        <dbReference type="ChEBI" id="CHEBI:15378"/>
        <dbReference type="ChEBI" id="CHEBI:15379"/>
        <dbReference type="ChEBI" id="CHEBI:29033"/>
        <dbReference type="ChEBI" id="CHEBI:29034"/>
        <dbReference type="EC" id="7.1.1.9"/>
    </reaction>
    <physiologicalReaction direction="left-to-right" evidence="2">
        <dbReference type="Rhea" id="RHEA:11437"/>
    </physiologicalReaction>
</comment>
<comment type="subunit">
    <text evidence="1">Component of the cytochrome c oxidase (complex IV, CIV), a multisubunit enzyme composed of 14 subunits. The complex is composed of a catalytic core of 3 subunits MT-CO1, MT-CO2 and MT-CO3, encoded in the mitochondrial DNA, and 11 supernumerary subunits COX4I, COX5A, COX5B, COX6A, COX6B, COX6C, COX7A, COX7B, COX7C, COX8 and NDUFA4, which are encoded in the nuclear genome. The complex exists as a monomer or a dimer and forms supercomplexes (SCs) in the inner mitochondrial membrane with NADH-ubiquinone oxidoreductase (complex I, CI) and ubiquinol-cytochrome c oxidoreductase (cytochrome b-c1 complex, complex III, CIII), resulting in different assemblies (supercomplex SCI(1)III(2)IV(1) and megacomplex MCI(2)III(2)IV(2)).</text>
</comment>
<comment type="subcellular location">
    <subcellularLocation>
        <location evidence="1">Mitochondrion inner membrane</location>
        <topology evidence="1">Multi-pass membrane protein</topology>
    </subcellularLocation>
</comment>
<comment type="similarity">
    <text evidence="3">Belongs to the cytochrome c oxidase subunit 3 family.</text>
</comment>
<organism>
    <name type="scientific">Danio rerio</name>
    <name type="common">Zebrafish</name>
    <name type="synonym">Brachydanio rerio</name>
    <dbReference type="NCBI Taxonomy" id="7955"/>
    <lineage>
        <taxon>Eukaryota</taxon>
        <taxon>Metazoa</taxon>
        <taxon>Chordata</taxon>
        <taxon>Craniata</taxon>
        <taxon>Vertebrata</taxon>
        <taxon>Euteleostomi</taxon>
        <taxon>Actinopterygii</taxon>
        <taxon>Neopterygii</taxon>
        <taxon>Teleostei</taxon>
        <taxon>Ostariophysi</taxon>
        <taxon>Cypriniformes</taxon>
        <taxon>Danionidae</taxon>
        <taxon>Danioninae</taxon>
        <taxon>Danio</taxon>
    </lineage>
</organism>
<protein>
    <recommendedName>
        <fullName>Cytochrome c oxidase subunit 3</fullName>
        <ecNumber>7.1.1.9</ecNumber>
    </recommendedName>
    <alternativeName>
        <fullName>Cytochrome c oxidase polypeptide III</fullName>
    </alternativeName>
</protein>
<reference key="1">
    <citation type="journal article" date="2001" name="Genome Res.">
        <title>The complete sequence of the zebrafish (Danio rerio) mitochondrial genome and evolutionary patterns in vertebrate mitochondrial DNA.</title>
        <authorList>
            <person name="Broughton R.E."/>
            <person name="Milam J.E."/>
            <person name="Roe B.A."/>
        </authorList>
    </citation>
    <scope>NUCLEOTIDE SEQUENCE [LARGE SCALE GENOMIC DNA]</scope>
    <source>
        <strain evidence="4">Tuebingen</strain>
    </source>
</reference>
<name>COX3_DANRE</name>
<feature type="chain" id="PRO_0000183749" description="Cytochrome c oxidase subunit 3">
    <location>
        <begin position="1"/>
        <end position="261"/>
    </location>
</feature>
<feature type="topological domain" description="Mitochondrial matrix" evidence="1">
    <location>
        <begin position="1"/>
        <end position="15"/>
    </location>
</feature>
<feature type="transmembrane region" description="Helical; Name=I" evidence="1">
    <location>
        <begin position="16"/>
        <end position="34"/>
    </location>
</feature>
<feature type="topological domain" description="Mitochondrial intermembrane" evidence="1">
    <location>
        <begin position="35"/>
        <end position="40"/>
    </location>
</feature>
<feature type="transmembrane region" description="Helical; Name=II" evidence="1">
    <location>
        <begin position="41"/>
        <end position="66"/>
    </location>
</feature>
<feature type="topological domain" description="Mitochondrial matrix" evidence="1">
    <location>
        <begin position="67"/>
        <end position="72"/>
    </location>
</feature>
<feature type="transmembrane region" description="Helical; Name=III" evidence="1">
    <location>
        <begin position="73"/>
        <end position="105"/>
    </location>
</feature>
<feature type="topological domain" description="Mitochondrial intermembrane" evidence="1">
    <location>
        <begin position="106"/>
        <end position="128"/>
    </location>
</feature>
<feature type="transmembrane region" description="Helical; Name=IV" evidence="1">
    <location>
        <begin position="129"/>
        <end position="152"/>
    </location>
</feature>
<feature type="topological domain" description="Mitochondrial matrix" evidence="1">
    <location>
        <begin position="153"/>
        <end position="155"/>
    </location>
</feature>
<feature type="transmembrane region" description="Helical; Name=V" evidence="1">
    <location>
        <begin position="156"/>
        <end position="183"/>
    </location>
</feature>
<feature type="topological domain" description="Mitochondrial intermembrane" evidence="1">
    <location>
        <begin position="184"/>
        <end position="190"/>
    </location>
</feature>
<feature type="transmembrane region" description="Helical; Name=VI" evidence="1">
    <location>
        <begin position="191"/>
        <end position="223"/>
    </location>
</feature>
<feature type="topological domain" description="Mitochondrial matrix" evidence="1">
    <location>
        <begin position="224"/>
        <end position="232"/>
    </location>
</feature>
<feature type="transmembrane region" description="Helical; Name=VII" evidence="1">
    <location>
        <begin position="233"/>
        <end position="256"/>
    </location>
</feature>
<feature type="topological domain" description="Mitochondrial intermembrane" evidence="1">
    <location>
        <begin position="257"/>
        <end position="261"/>
    </location>
</feature>
<evidence type="ECO:0000250" key="1">
    <source>
        <dbReference type="UniProtKB" id="P00415"/>
    </source>
</evidence>
<evidence type="ECO:0000250" key="2">
    <source>
        <dbReference type="UniProtKB" id="P00420"/>
    </source>
</evidence>
<evidence type="ECO:0000305" key="3"/>
<evidence type="ECO:0000312" key="4">
    <source>
        <dbReference type="Proteomes" id="UP000000437"/>
    </source>
</evidence>
<dbReference type="EC" id="7.1.1.9"/>
<dbReference type="EMBL" id="AC024175">
    <property type="protein sequence ID" value="AAF74303.1"/>
    <property type="molecule type" value="Genomic_DNA"/>
</dbReference>
<dbReference type="RefSeq" id="NP_059337.1">
    <property type="nucleotide sequence ID" value="NC_002333.2"/>
</dbReference>
<dbReference type="SMR" id="Q9MIY4"/>
<dbReference type="FunCoup" id="Q9MIY4">
    <property type="interactions" value="14"/>
</dbReference>
<dbReference type="STRING" id="7955.ENSDARP00000087875"/>
<dbReference type="PaxDb" id="7955-ENSDARP00000087875"/>
<dbReference type="Ensembl" id="ENSDART00000093613">
    <property type="protein sequence ID" value="ENSDARP00000087875"/>
    <property type="gene ID" value="ENSDARG00000063912"/>
</dbReference>
<dbReference type="GeneID" id="140541"/>
<dbReference type="KEGG" id="dre:140541"/>
<dbReference type="AGR" id="ZFIN:ZDB-GENE-011205-16"/>
<dbReference type="CTD" id="4514"/>
<dbReference type="ZFIN" id="ZDB-GENE-011205-16">
    <property type="gene designation" value="mt-co3"/>
</dbReference>
<dbReference type="eggNOG" id="KOG4664">
    <property type="taxonomic scope" value="Eukaryota"/>
</dbReference>
<dbReference type="HOGENOM" id="CLU_044071_0_0_1"/>
<dbReference type="InParanoid" id="Q9MIY4"/>
<dbReference type="OMA" id="SIYWWGS"/>
<dbReference type="OrthoDB" id="10050457at2759"/>
<dbReference type="PhylomeDB" id="Q9MIY4"/>
<dbReference type="TreeFam" id="TF343435"/>
<dbReference type="Reactome" id="R-DRE-5628897">
    <property type="pathway name" value="TP53 Regulates Metabolic Genes"/>
</dbReference>
<dbReference type="Reactome" id="R-DRE-611105">
    <property type="pathway name" value="Respiratory electron transport"/>
</dbReference>
<dbReference type="Reactome" id="R-DRE-9707564">
    <property type="pathway name" value="Cytoprotection by HMOX1"/>
</dbReference>
<dbReference type="PRO" id="PR:Q9MIY4"/>
<dbReference type="Proteomes" id="UP000000437">
    <property type="component" value="Mitochondrion MT"/>
</dbReference>
<dbReference type="Bgee" id="ENSDARG00000063912">
    <property type="expression patterns" value="Expressed in mature ovarian follicle and 22 other cell types or tissues"/>
</dbReference>
<dbReference type="GO" id="GO:0005743">
    <property type="term" value="C:mitochondrial inner membrane"/>
    <property type="evidence" value="ECO:0007669"/>
    <property type="project" value="UniProtKB-SubCell"/>
</dbReference>
<dbReference type="GO" id="GO:0005739">
    <property type="term" value="C:mitochondrion"/>
    <property type="evidence" value="ECO:0000318"/>
    <property type="project" value="GO_Central"/>
</dbReference>
<dbReference type="GO" id="GO:0045277">
    <property type="term" value="C:respiratory chain complex IV"/>
    <property type="evidence" value="ECO:0000250"/>
    <property type="project" value="UniProtKB"/>
</dbReference>
<dbReference type="GO" id="GO:0004129">
    <property type="term" value="F:cytochrome-c oxidase activity"/>
    <property type="evidence" value="ECO:0007669"/>
    <property type="project" value="UniProtKB-EC"/>
</dbReference>
<dbReference type="GO" id="GO:0006123">
    <property type="term" value="P:mitochondrial electron transport, cytochrome c to oxygen"/>
    <property type="evidence" value="ECO:0000318"/>
    <property type="project" value="GO_Central"/>
</dbReference>
<dbReference type="CDD" id="cd01665">
    <property type="entry name" value="Cyt_c_Oxidase_III"/>
    <property type="match status" value="1"/>
</dbReference>
<dbReference type="FunFam" id="1.10.287.70:FF:000048">
    <property type="entry name" value="Cytochrome c oxidase subunit 3"/>
    <property type="match status" value="1"/>
</dbReference>
<dbReference type="FunFam" id="1.20.120.80:FF:000002">
    <property type="entry name" value="Cytochrome c oxidase subunit 3"/>
    <property type="match status" value="1"/>
</dbReference>
<dbReference type="Gene3D" id="1.10.287.70">
    <property type="match status" value="1"/>
</dbReference>
<dbReference type="Gene3D" id="1.20.120.80">
    <property type="entry name" value="Cytochrome c oxidase, subunit III, four-helix bundle"/>
    <property type="match status" value="1"/>
</dbReference>
<dbReference type="InterPro" id="IPR024791">
    <property type="entry name" value="Cyt_c/ubiquinol_Oxase_su3"/>
</dbReference>
<dbReference type="InterPro" id="IPR033945">
    <property type="entry name" value="Cyt_c_oxase_su3_dom"/>
</dbReference>
<dbReference type="InterPro" id="IPR000298">
    <property type="entry name" value="Cyt_c_oxidase-like_su3"/>
</dbReference>
<dbReference type="InterPro" id="IPR035973">
    <property type="entry name" value="Cyt_c_oxidase_su3-like_sf"/>
</dbReference>
<dbReference type="InterPro" id="IPR013833">
    <property type="entry name" value="Cyt_c_oxidase_su3_a-hlx"/>
</dbReference>
<dbReference type="PANTHER" id="PTHR11403:SF7">
    <property type="entry name" value="CYTOCHROME C OXIDASE SUBUNIT 3"/>
    <property type="match status" value="1"/>
</dbReference>
<dbReference type="PANTHER" id="PTHR11403">
    <property type="entry name" value="CYTOCHROME C OXIDASE SUBUNIT III"/>
    <property type="match status" value="1"/>
</dbReference>
<dbReference type="Pfam" id="PF00510">
    <property type="entry name" value="COX3"/>
    <property type="match status" value="1"/>
</dbReference>
<dbReference type="SUPFAM" id="SSF81452">
    <property type="entry name" value="Cytochrome c oxidase subunit III-like"/>
    <property type="match status" value="1"/>
</dbReference>
<dbReference type="PROSITE" id="PS50253">
    <property type="entry name" value="COX3"/>
    <property type="match status" value="1"/>
</dbReference>
<geneLocation type="mitochondrion"/>
<gene>
    <name type="primary">mt-co3</name>
    <name type="synonym">coiii</name>
    <name type="synonym">cox3</name>
    <name type="synonym">coxiii</name>
    <name type="synonym">mtco3</name>
</gene>